<gene>
    <name type="primary">yrbL</name>
    <name type="ordered locus">SF3247</name>
    <name type="ordered locus">S3465</name>
</gene>
<sequence>MIRLSEQSPLGTGRHRKCYAHPEDAQRCIKIVYHRGDGGDKEIRRELKYYAHLGRRLKDWSGIPRYHGTVETDCGTGYVYDVIADFDGKPSITLTEFAEQCRYEEDIAQLRQLLKQLKRYLQDNRIVTMSLKPQNILCHRISESEVIPVVCDNIGESTLIPLATWSKWCCLRKQERLWKRFIAQPALAIALQKDLQPRESKTLALTSREA</sequence>
<proteinExistence type="predicted"/>
<reference key="1">
    <citation type="journal article" date="2002" name="Nucleic Acids Res.">
        <title>Genome sequence of Shigella flexneri 2a: insights into pathogenicity through comparison with genomes of Escherichia coli K12 and O157.</title>
        <authorList>
            <person name="Jin Q."/>
            <person name="Yuan Z."/>
            <person name="Xu J."/>
            <person name="Wang Y."/>
            <person name="Shen Y."/>
            <person name="Lu W."/>
            <person name="Wang J."/>
            <person name="Liu H."/>
            <person name="Yang J."/>
            <person name="Yang F."/>
            <person name="Zhang X."/>
            <person name="Zhang J."/>
            <person name="Yang G."/>
            <person name="Wu H."/>
            <person name="Qu D."/>
            <person name="Dong J."/>
            <person name="Sun L."/>
            <person name="Xue Y."/>
            <person name="Zhao A."/>
            <person name="Gao Y."/>
            <person name="Zhu J."/>
            <person name="Kan B."/>
            <person name="Ding K."/>
            <person name="Chen S."/>
            <person name="Cheng H."/>
            <person name="Yao Z."/>
            <person name="He B."/>
            <person name="Chen R."/>
            <person name="Ma D."/>
            <person name="Qiang B."/>
            <person name="Wen Y."/>
            <person name="Hou Y."/>
            <person name="Yu J."/>
        </authorList>
    </citation>
    <scope>NUCLEOTIDE SEQUENCE [LARGE SCALE GENOMIC DNA]</scope>
    <source>
        <strain>301 / Serotype 2a</strain>
    </source>
</reference>
<reference key="2">
    <citation type="journal article" date="2003" name="Infect. Immun.">
        <title>Complete genome sequence and comparative genomics of Shigella flexneri serotype 2a strain 2457T.</title>
        <authorList>
            <person name="Wei J."/>
            <person name="Goldberg M.B."/>
            <person name="Burland V."/>
            <person name="Venkatesan M.M."/>
            <person name="Deng W."/>
            <person name="Fournier G."/>
            <person name="Mayhew G.F."/>
            <person name="Plunkett G. III"/>
            <person name="Rose D.J."/>
            <person name="Darling A."/>
            <person name="Mau B."/>
            <person name="Perna N.T."/>
            <person name="Payne S.M."/>
            <person name="Runyen-Janecky L.J."/>
            <person name="Zhou S."/>
            <person name="Schwartz D.C."/>
            <person name="Blattner F.R."/>
        </authorList>
    </citation>
    <scope>NUCLEOTIDE SEQUENCE [LARGE SCALE GENOMIC DNA]</scope>
    <source>
        <strain>ATCC 700930 / 2457T / Serotype 2a</strain>
    </source>
</reference>
<name>YRBL_SHIFL</name>
<dbReference type="EMBL" id="AE005674">
    <property type="protein sequence ID" value="AAN44713.2"/>
    <property type="molecule type" value="Genomic_DNA"/>
</dbReference>
<dbReference type="EMBL" id="AE014073">
    <property type="protein sequence ID" value="AAP18527.1"/>
    <property type="molecule type" value="Genomic_DNA"/>
</dbReference>
<dbReference type="RefSeq" id="NP_709006.2">
    <property type="nucleotide sequence ID" value="NC_004337.2"/>
</dbReference>
<dbReference type="RefSeq" id="WP_000620405.1">
    <property type="nucleotide sequence ID" value="NZ_WPGW01000004.1"/>
</dbReference>
<dbReference type="SMR" id="P64611"/>
<dbReference type="STRING" id="198214.SF3247"/>
<dbReference type="PaxDb" id="198214-SF3247"/>
<dbReference type="GeneID" id="1027097"/>
<dbReference type="GeneID" id="75206063"/>
<dbReference type="KEGG" id="sfl:SF3247"/>
<dbReference type="KEGG" id="sfx:S3465"/>
<dbReference type="PATRIC" id="fig|198214.7.peg.3848"/>
<dbReference type="HOGENOM" id="CLU_076352_3_1_6"/>
<dbReference type="Proteomes" id="UP000001006">
    <property type="component" value="Chromosome"/>
</dbReference>
<dbReference type="Proteomes" id="UP000002673">
    <property type="component" value="Chromosome"/>
</dbReference>
<dbReference type="InterPro" id="IPR011009">
    <property type="entry name" value="Kinase-like_dom_sf"/>
</dbReference>
<dbReference type="InterPro" id="IPR019647">
    <property type="entry name" value="PhoP_reg_network_YrbL"/>
</dbReference>
<dbReference type="NCBIfam" id="NF007671">
    <property type="entry name" value="PRK10345.1"/>
    <property type="match status" value="1"/>
</dbReference>
<dbReference type="Pfam" id="PF10707">
    <property type="entry name" value="YrbL-PhoP_reg"/>
    <property type="match status" value="1"/>
</dbReference>
<dbReference type="SUPFAM" id="SSF56112">
    <property type="entry name" value="Protein kinase-like (PK-like)"/>
    <property type="match status" value="1"/>
</dbReference>
<protein>
    <recommendedName>
        <fullName>Uncharacterized protein YrbL</fullName>
    </recommendedName>
</protein>
<feature type="chain" id="PRO_0000169476" description="Uncharacterized protein YrbL">
    <location>
        <begin position="1"/>
        <end position="210"/>
    </location>
</feature>
<organism>
    <name type="scientific">Shigella flexneri</name>
    <dbReference type="NCBI Taxonomy" id="623"/>
    <lineage>
        <taxon>Bacteria</taxon>
        <taxon>Pseudomonadati</taxon>
        <taxon>Pseudomonadota</taxon>
        <taxon>Gammaproteobacteria</taxon>
        <taxon>Enterobacterales</taxon>
        <taxon>Enterobacteriaceae</taxon>
        <taxon>Shigella</taxon>
    </lineage>
</organism>
<keyword id="KW-1185">Reference proteome</keyword>
<accession>P64611</accession>
<accession>P46021</accession>